<name>LPXH_PHOLL</name>
<gene>
    <name evidence="1" type="primary">lpxH</name>
    <name type="ordered locus">plu3806</name>
</gene>
<proteinExistence type="inferred from homology"/>
<reference key="1">
    <citation type="journal article" date="2003" name="Nat. Biotechnol.">
        <title>The genome sequence of the entomopathogenic bacterium Photorhabdus luminescens.</title>
        <authorList>
            <person name="Duchaud E."/>
            <person name="Rusniok C."/>
            <person name="Frangeul L."/>
            <person name="Buchrieser C."/>
            <person name="Givaudan A."/>
            <person name="Taourit S."/>
            <person name="Bocs S."/>
            <person name="Boursaux-Eude C."/>
            <person name="Chandler M."/>
            <person name="Charles J.-F."/>
            <person name="Dassa E."/>
            <person name="Derose R."/>
            <person name="Derzelle S."/>
            <person name="Freyssinet G."/>
            <person name="Gaudriault S."/>
            <person name="Medigue C."/>
            <person name="Lanois A."/>
            <person name="Powell K."/>
            <person name="Siguier P."/>
            <person name="Vincent R."/>
            <person name="Wingate V."/>
            <person name="Zouine M."/>
            <person name="Glaser P."/>
            <person name="Boemare N."/>
            <person name="Danchin A."/>
            <person name="Kunst F."/>
        </authorList>
    </citation>
    <scope>NUCLEOTIDE SEQUENCE [LARGE SCALE GENOMIC DNA]</scope>
    <source>
        <strain>DSM 15139 / CIP 105565 / TT01</strain>
    </source>
</reference>
<keyword id="KW-0997">Cell inner membrane</keyword>
<keyword id="KW-1003">Cell membrane</keyword>
<keyword id="KW-0378">Hydrolase</keyword>
<keyword id="KW-0441">Lipid A biosynthesis</keyword>
<keyword id="KW-0444">Lipid biosynthesis</keyword>
<keyword id="KW-0443">Lipid metabolism</keyword>
<keyword id="KW-0464">Manganese</keyword>
<keyword id="KW-0472">Membrane</keyword>
<keyword id="KW-0479">Metal-binding</keyword>
<keyword id="KW-1185">Reference proteome</keyword>
<evidence type="ECO:0000255" key="1">
    <source>
        <dbReference type="HAMAP-Rule" id="MF_00575"/>
    </source>
</evidence>
<protein>
    <recommendedName>
        <fullName evidence="1">UDP-2,3-diacylglucosamine hydrolase</fullName>
        <ecNumber evidence="1">3.6.1.54</ecNumber>
    </recommendedName>
    <alternativeName>
        <fullName evidence="1">UDP-2,3-diacylglucosamine diphosphatase</fullName>
    </alternativeName>
</protein>
<comment type="function">
    <text evidence="1">Hydrolyzes the pyrophosphate bond of UDP-2,3-diacylglucosamine to yield 2,3-diacylglucosamine 1-phosphate (lipid X) and UMP by catalyzing the attack of water at the alpha-P atom. Involved in the biosynthesis of lipid A, a phosphorylated glycolipid that anchors the lipopolysaccharide to the outer membrane of the cell.</text>
</comment>
<comment type="catalytic activity">
    <reaction evidence="1">
        <text>UDP-2-N,3-O-bis[(3R)-3-hydroxytetradecanoyl]-alpha-D-glucosamine + H2O = 2-N,3-O-bis[(3R)-3-hydroxytetradecanoyl]-alpha-D-glucosaminyl 1-phosphate + UMP + 2 H(+)</text>
        <dbReference type="Rhea" id="RHEA:25213"/>
        <dbReference type="ChEBI" id="CHEBI:15377"/>
        <dbReference type="ChEBI" id="CHEBI:15378"/>
        <dbReference type="ChEBI" id="CHEBI:57865"/>
        <dbReference type="ChEBI" id="CHEBI:57957"/>
        <dbReference type="ChEBI" id="CHEBI:78847"/>
        <dbReference type="EC" id="3.6.1.54"/>
    </reaction>
</comment>
<comment type="cofactor">
    <cofactor evidence="1">
        <name>Mn(2+)</name>
        <dbReference type="ChEBI" id="CHEBI:29035"/>
    </cofactor>
    <text evidence="1">Binds 2 Mn(2+) ions per subunit in a binuclear metal center.</text>
</comment>
<comment type="pathway">
    <text evidence="1">Glycolipid biosynthesis; lipid IV(A) biosynthesis; lipid IV(A) from (3R)-3-hydroxytetradecanoyl-[acyl-carrier-protein] and UDP-N-acetyl-alpha-D-glucosamine: step 4/6.</text>
</comment>
<comment type="subcellular location">
    <subcellularLocation>
        <location evidence="1">Cell inner membrane</location>
        <topology evidence="1">Peripheral membrane protein</topology>
        <orientation evidence="1">Cytoplasmic side</orientation>
    </subcellularLocation>
</comment>
<comment type="similarity">
    <text evidence="1">Belongs to the LpxH family.</text>
</comment>
<feature type="chain" id="PRO_0000214116" description="UDP-2,3-diacylglucosamine hydrolase">
    <location>
        <begin position="1"/>
        <end position="240"/>
    </location>
</feature>
<feature type="binding site" evidence="1">
    <location>
        <position position="8"/>
    </location>
    <ligand>
        <name>Mn(2+)</name>
        <dbReference type="ChEBI" id="CHEBI:29035"/>
        <label>1</label>
    </ligand>
</feature>
<feature type="binding site" evidence="1">
    <location>
        <position position="10"/>
    </location>
    <ligand>
        <name>Mn(2+)</name>
        <dbReference type="ChEBI" id="CHEBI:29035"/>
        <label>1</label>
    </ligand>
</feature>
<feature type="binding site" evidence="1">
    <location>
        <position position="41"/>
    </location>
    <ligand>
        <name>Mn(2+)</name>
        <dbReference type="ChEBI" id="CHEBI:29035"/>
        <label>1</label>
    </ligand>
</feature>
<feature type="binding site" evidence="1">
    <location>
        <position position="41"/>
    </location>
    <ligand>
        <name>Mn(2+)</name>
        <dbReference type="ChEBI" id="CHEBI:29035"/>
        <label>2</label>
    </ligand>
</feature>
<feature type="binding site" evidence="1">
    <location>
        <begin position="79"/>
        <end position="80"/>
    </location>
    <ligand>
        <name>substrate</name>
    </ligand>
</feature>
<feature type="binding site" evidence="1">
    <location>
        <position position="79"/>
    </location>
    <ligand>
        <name>Mn(2+)</name>
        <dbReference type="ChEBI" id="CHEBI:29035"/>
        <label>2</label>
    </ligand>
</feature>
<feature type="binding site" evidence="1">
    <location>
        <position position="114"/>
    </location>
    <ligand>
        <name>Mn(2+)</name>
        <dbReference type="ChEBI" id="CHEBI:29035"/>
        <label>2</label>
    </ligand>
</feature>
<feature type="binding site" evidence="1">
    <location>
        <position position="122"/>
    </location>
    <ligand>
        <name>substrate</name>
    </ligand>
</feature>
<feature type="binding site" evidence="1">
    <location>
        <position position="160"/>
    </location>
    <ligand>
        <name>substrate</name>
    </ligand>
</feature>
<feature type="binding site" evidence="1">
    <location>
        <position position="164"/>
    </location>
    <ligand>
        <name>substrate</name>
    </ligand>
</feature>
<feature type="binding site" evidence="1">
    <location>
        <position position="167"/>
    </location>
    <ligand>
        <name>substrate</name>
    </ligand>
</feature>
<feature type="binding site" evidence="1">
    <location>
        <position position="195"/>
    </location>
    <ligand>
        <name>Mn(2+)</name>
        <dbReference type="ChEBI" id="CHEBI:29035"/>
        <label>2</label>
    </ligand>
</feature>
<feature type="binding site" evidence="1">
    <location>
        <position position="195"/>
    </location>
    <ligand>
        <name>substrate</name>
    </ligand>
</feature>
<feature type="binding site" evidence="1">
    <location>
        <position position="197"/>
    </location>
    <ligand>
        <name>Mn(2+)</name>
        <dbReference type="ChEBI" id="CHEBI:29035"/>
        <label>1</label>
    </ligand>
</feature>
<accession>Q7N0S3</accession>
<organism>
    <name type="scientific">Photorhabdus laumondii subsp. laumondii (strain DSM 15139 / CIP 105565 / TT01)</name>
    <name type="common">Photorhabdus luminescens subsp. laumondii</name>
    <dbReference type="NCBI Taxonomy" id="243265"/>
    <lineage>
        <taxon>Bacteria</taxon>
        <taxon>Pseudomonadati</taxon>
        <taxon>Pseudomonadota</taxon>
        <taxon>Gammaproteobacteria</taxon>
        <taxon>Enterobacterales</taxon>
        <taxon>Morganellaceae</taxon>
        <taxon>Photorhabdus</taxon>
    </lineage>
</organism>
<sequence>MCTLFIADLHLSEHEPAITAGFLRFLREDAIQADSLYILGDLFDYWIGDDDNNPLHREIASALKTVQQQGVSCYFIHGNRDFLLGSRFAKESGIILLPQEKVLELYGKRVLILHGDTLCTDDEGYQRYRKRVHTPWIQRLFLLLPLSIRQKIAVKMRANSQSVNRRKSEAIMDVNQQAVIDTFERYQADWMIHGHTHRPFVHEVPLHDKTVYRGVLGAWHHQGSMFKITDKSIDLISFPF</sequence>
<dbReference type="EC" id="3.6.1.54" evidence="1"/>
<dbReference type="EMBL" id="BX571871">
    <property type="protein sequence ID" value="CAE16178.1"/>
    <property type="molecule type" value="Genomic_DNA"/>
</dbReference>
<dbReference type="RefSeq" id="WP_011147947.1">
    <property type="nucleotide sequence ID" value="NC_005126.1"/>
</dbReference>
<dbReference type="SMR" id="Q7N0S3"/>
<dbReference type="STRING" id="243265.plu3806"/>
<dbReference type="GeneID" id="48850037"/>
<dbReference type="KEGG" id="plu:plu3806"/>
<dbReference type="eggNOG" id="COG2908">
    <property type="taxonomic scope" value="Bacteria"/>
</dbReference>
<dbReference type="HOGENOM" id="CLU_074586_0_0_6"/>
<dbReference type="OrthoDB" id="9783283at2"/>
<dbReference type="UniPathway" id="UPA00359">
    <property type="reaction ID" value="UER00480"/>
</dbReference>
<dbReference type="Proteomes" id="UP000002514">
    <property type="component" value="Chromosome"/>
</dbReference>
<dbReference type="GO" id="GO:0005737">
    <property type="term" value="C:cytoplasm"/>
    <property type="evidence" value="ECO:0007669"/>
    <property type="project" value="InterPro"/>
</dbReference>
<dbReference type="GO" id="GO:0019897">
    <property type="term" value="C:extrinsic component of plasma membrane"/>
    <property type="evidence" value="ECO:0007669"/>
    <property type="project" value="UniProtKB-UniRule"/>
</dbReference>
<dbReference type="GO" id="GO:0030145">
    <property type="term" value="F:manganese ion binding"/>
    <property type="evidence" value="ECO:0007669"/>
    <property type="project" value="UniProtKB-UniRule"/>
</dbReference>
<dbReference type="GO" id="GO:0008758">
    <property type="term" value="F:UDP-2,3-diacylglucosamine hydrolase activity"/>
    <property type="evidence" value="ECO:0007669"/>
    <property type="project" value="UniProtKB-UniRule"/>
</dbReference>
<dbReference type="GO" id="GO:0009245">
    <property type="term" value="P:lipid A biosynthetic process"/>
    <property type="evidence" value="ECO:0007669"/>
    <property type="project" value="UniProtKB-UniRule"/>
</dbReference>
<dbReference type="CDD" id="cd07398">
    <property type="entry name" value="MPP_YbbF-LpxH"/>
    <property type="match status" value="1"/>
</dbReference>
<dbReference type="FunFam" id="3.60.21.10:FF:000012">
    <property type="entry name" value="UDP-2,3-diacylglucosamine hydrolase"/>
    <property type="match status" value="1"/>
</dbReference>
<dbReference type="Gene3D" id="3.60.21.10">
    <property type="match status" value="1"/>
</dbReference>
<dbReference type="HAMAP" id="MF_00575">
    <property type="entry name" value="LpxH"/>
    <property type="match status" value="1"/>
</dbReference>
<dbReference type="InterPro" id="IPR004843">
    <property type="entry name" value="Calcineurin-like_PHP_ApaH"/>
</dbReference>
<dbReference type="InterPro" id="IPR043461">
    <property type="entry name" value="LpxH-like"/>
</dbReference>
<dbReference type="InterPro" id="IPR029052">
    <property type="entry name" value="Metallo-depent_PP-like"/>
</dbReference>
<dbReference type="InterPro" id="IPR010138">
    <property type="entry name" value="UDP-diacylglucosamine_Hdrlase"/>
</dbReference>
<dbReference type="NCBIfam" id="TIGR01854">
    <property type="entry name" value="lipid_A_lpxH"/>
    <property type="match status" value="1"/>
</dbReference>
<dbReference type="NCBIfam" id="NF003743">
    <property type="entry name" value="PRK05340.1"/>
    <property type="match status" value="1"/>
</dbReference>
<dbReference type="PANTHER" id="PTHR34990:SF1">
    <property type="entry name" value="UDP-2,3-DIACYLGLUCOSAMINE HYDROLASE"/>
    <property type="match status" value="1"/>
</dbReference>
<dbReference type="PANTHER" id="PTHR34990">
    <property type="entry name" value="UDP-2,3-DIACYLGLUCOSAMINE HYDROLASE-RELATED"/>
    <property type="match status" value="1"/>
</dbReference>
<dbReference type="Pfam" id="PF00149">
    <property type="entry name" value="Metallophos"/>
    <property type="match status" value="1"/>
</dbReference>
<dbReference type="SUPFAM" id="SSF56300">
    <property type="entry name" value="Metallo-dependent phosphatases"/>
    <property type="match status" value="1"/>
</dbReference>